<name>PAG59_SHEEP</name>
<feature type="chain" id="PRO_0000199520" description="Pregnancy-associated glycoprotein 59">
    <location>
        <begin position="1"/>
        <end position="15" status="greater than"/>
    </location>
</feature>
<feature type="glycosylation site" description="N-linked (GlcNAc...) asparagine" evidence="1">
    <location>
        <position position="4"/>
    </location>
</feature>
<feature type="non-terminal residue" evidence="2">
    <location>
        <position position="15"/>
    </location>
</feature>
<evidence type="ECO:0000255" key="1"/>
<evidence type="ECO:0000305" key="2"/>
<comment type="subcellular location">
    <subcellularLocation>
        <location>Secreted</location>
    </subcellularLocation>
</comment>
<comment type="similarity">
    <text evidence="2">Belongs to the peptidase A1 family.</text>
</comment>
<reference key="1">
    <citation type="journal article" date="2003" name="Mol. Reprod. Dev.">
        <title>Isolation and partial characterization of three pregnancy-associated glycoproteins from the ewe placenta.</title>
        <authorList>
            <person name="El Amiri B."/>
            <person name="Remy B."/>
            <person name="Sousa N.M."/>
            <person name="Joris B."/>
            <person name="Ottiers N.G."/>
            <person name="Perenyi Z."/>
            <person name="Mboko H.B."/>
            <person name="Beckers J.-F.M.P."/>
        </authorList>
    </citation>
    <scope>PROTEIN SEQUENCE</scope>
    <source>
        <tissue>Placenta</tissue>
    </source>
</reference>
<sequence length="15" mass="1762">RGSNLTIHPLRNIRD</sequence>
<keyword id="KW-0064">Aspartyl protease</keyword>
<keyword id="KW-0903">Direct protein sequencing</keyword>
<keyword id="KW-0325">Glycoprotein</keyword>
<keyword id="KW-0378">Hydrolase</keyword>
<keyword id="KW-0645">Protease</keyword>
<keyword id="KW-1185">Reference proteome</keyword>
<keyword id="KW-0964">Secreted</keyword>
<proteinExistence type="evidence at protein level"/>
<organism evidence="2">
    <name type="scientific">Ovis aries</name>
    <name type="common">Sheep</name>
    <dbReference type="NCBI Taxonomy" id="9940"/>
    <lineage>
        <taxon>Eukaryota</taxon>
        <taxon>Metazoa</taxon>
        <taxon>Chordata</taxon>
        <taxon>Craniata</taxon>
        <taxon>Vertebrata</taxon>
        <taxon>Euteleostomi</taxon>
        <taxon>Mammalia</taxon>
        <taxon>Eutheria</taxon>
        <taxon>Laurasiatheria</taxon>
        <taxon>Artiodactyla</taxon>
        <taxon>Ruminantia</taxon>
        <taxon>Pecora</taxon>
        <taxon>Bovidae</taxon>
        <taxon>Caprinae</taxon>
        <taxon>Ovis</taxon>
    </lineage>
</organism>
<accession>P83444</accession>
<protein>
    <recommendedName>
        <fullName>Pregnancy-associated glycoprotein 59</fullName>
        <ecNumber>3.4.23.-</ecNumber>
    </recommendedName>
    <alternativeName>
        <fullName>ovPAG-59</fullName>
    </alternativeName>
</protein>
<dbReference type="EC" id="3.4.23.-"/>
<dbReference type="eggNOG" id="KOG1339">
    <property type="taxonomic scope" value="Eukaryota"/>
</dbReference>
<dbReference type="Proteomes" id="UP000002356">
    <property type="component" value="Unplaced"/>
</dbReference>
<dbReference type="GO" id="GO:0005576">
    <property type="term" value="C:extracellular region"/>
    <property type="evidence" value="ECO:0007669"/>
    <property type="project" value="UniProtKB-SubCell"/>
</dbReference>
<dbReference type="GO" id="GO:0004190">
    <property type="term" value="F:aspartic-type endopeptidase activity"/>
    <property type="evidence" value="ECO:0007669"/>
    <property type="project" value="UniProtKB-KW"/>
</dbReference>
<dbReference type="GO" id="GO:0006508">
    <property type="term" value="P:proteolysis"/>
    <property type="evidence" value="ECO:0007669"/>
    <property type="project" value="UniProtKB-KW"/>
</dbReference>